<gene>
    <name type="primary">Glrx3</name>
    <name type="synonym">Picot</name>
    <name type="synonym">Txnl2</name>
</gene>
<accession>Q9CQM9</accession>
<accession>Q5I0V8</accession>
<accession>Q9JLZ2</accession>
<sequence>MAAGAAEAGEAAVAVVEVGSAQQFEELLRLKTKSLLVVHFWAPWAPQCVQMNDVMAELAKEHPHVSFVKLEAEAVPEVSEKYEISSVPTFLFFKNSQKVDRLDGAHAPELTKKVQRHVSSGAFPPSTNEHLKEDLSLRLKKLTHAAPCMLFMKGTPQEPRCGFSKQMVEILHKHNIQFSSFDIFSDEEVRQGLKTYSNWPTYPQLYVSGELIGGLDIIKELEASEELDTICPKAPKLEERLKVLTNKASVMLFMKGNKQEAKCGFSKQILEILNSTGVEYETFDILEDEEVRQGLKTFSNWPTYPQLYVRGDLVGGLDIVKELKDNGELLPILKGEN</sequence>
<reference key="1">
    <citation type="journal article" date="2000" name="J. Biol. Chem.">
        <title>Inhibition of the c-Jun N-terminal kinase/AP-1 and NF-kappaB pathways by PICOT, a novel protein kinase C-interacting protein with a thioredoxin homology domain.</title>
        <authorList>
            <person name="Witte S."/>
            <person name="Villalba M."/>
            <person name="Bi K."/>
            <person name="Liu Y."/>
            <person name="Isakov N."/>
            <person name="Altman A."/>
        </authorList>
    </citation>
    <scope>NUCLEOTIDE SEQUENCE [MRNA]</scope>
    <source>
        <strain>C57BL/6J</strain>
        <tissue>Embryo</tissue>
    </source>
</reference>
<reference key="2">
    <citation type="journal article" date="2005" name="Science">
        <title>The transcriptional landscape of the mammalian genome.</title>
        <authorList>
            <person name="Carninci P."/>
            <person name="Kasukawa T."/>
            <person name="Katayama S."/>
            <person name="Gough J."/>
            <person name="Frith M.C."/>
            <person name="Maeda N."/>
            <person name="Oyama R."/>
            <person name="Ravasi T."/>
            <person name="Lenhard B."/>
            <person name="Wells C."/>
            <person name="Kodzius R."/>
            <person name="Shimokawa K."/>
            <person name="Bajic V.B."/>
            <person name="Brenner S.E."/>
            <person name="Batalov S."/>
            <person name="Forrest A.R."/>
            <person name="Zavolan M."/>
            <person name="Davis M.J."/>
            <person name="Wilming L.G."/>
            <person name="Aidinis V."/>
            <person name="Allen J.E."/>
            <person name="Ambesi-Impiombato A."/>
            <person name="Apweiler R."/>
            <person name="Aturaliya R.N."/>
            <person name="Bailey T.L."/>
            <person name="Bansal M."/>
            <person name="Baxter L."/>
            <person name="Beisel K.W."/>
            <person name="Bersano T."/>
            <person name="Bono H."/>
            <person name="Chalk A.M."/>
            <person name="Chiu K.P."/>
            <person name="Choudhary V."/>
            <person name="Christoffels A."/>
            <person name="Clutterbuck D.R."/>
            <person name="Crowe M.L."/>
            <person name="Dalla E."/>
            <person name="Dalrymple B.P."/>
            <person name="de Bono B."/>
            <person name="Della Gatta G."/>
            <person name="di Bernardo D."/>
            <person name="Down T."/>
            <person name="Engstrom P."/>
            <person name="Fagiolini M."/>
            <person name="Faulkner G."/>
            <person name="Fletcher C.F."/>
            <person name="Fukushima T."/>
            <person name="Furuno M."/>
            <person name="Futaki S."/>
            <person name="Gariboldi M."/>
            <person name="Georgii-Hemming P."/>
            <person name="Gingeras T.R."/>
            <person name="Gojobori T."/>
            <person name="Green R.E."/>
            <person name="Gustincich S."/>
            <person name="Harbers M."/>
            <person name="Hayashi Y."/>
            <person name="Hensch T.K."/>
            <person name="Hirokawa N."/>
            <person name="Hill D."/>
            <person name="Huminiecki L."/>
            <person name="Iacono M."/>
            <person name="Ikeo K."/>
            <person name="Iwama A."/>
            <person name="Ishikawa T."/>
            <person name="Jakt M."/>
            <person name="Kanapin A."/>
            <person name="Katoh M."/>
            <person name="Kawasawa Y."/>
            <person name="Kelso J."/>
            <person name="Kitamura H."/>
            <person name="Kitano H."/>
            <person name="Kollias G."/>
            <person name="Krishnan S.P."/>
            <person name="Kruger A."/>
            <person name="Kummerfeld S.K."/>
            <person name="Kurochkin I.V."/>
            <person name="Lareau L.F."/>
            <person name="Lazarevic D."/>
            <person name="Lipovich L."/>
            <person name="Liu J."/>
            <person name="Liuni S."/>
            <person name="McWilliam S."/>
            <person name="Madan Babu M."/>
            <person name="Madera M."/>
            <person name="Marchionni L."/>
            <person name="Matsuda H."/>
            <person name="Matsuzawa S."/>
            <person name="Miki H."/>
            <person name="Mignone F."/>
            <person name="Miyake S."/>
            <person name="Morris K."/>
            <person name="Mottagui-Tabar S."/>
            <person name="Mulder N."/>
            <person name="Nakano N."/>
            <person name="Nakauchi H."/>
            <person name="Ng P."/>
            <person name="Nilsson R."/>
            <person name="Nishiguchi S."/>
            <person name="Nishikawa S."/>
            <person name="Nori F."/>
            <person name="Ohara O."/>
            <person name="Okazaki Y."/>
            <person name="Orlando V."/>
            <person name="Pang K.C."/>
            <person name="Pavan W.J."/>
            <person name="Pavesi G."/>
            <person name="Pesole G."/>
            <person name="Petrovsky N."/>
            <person name="Piazza S."/>
            <person name="Reed J."/>
            <person name="Reid J.F."/>
            <person name="Ring B.Z."/>
            <person name="Ringwald M."/>
            <person name="Rost B."/>
            <person name="Ruan Y."/>
            <person name="Salzberg S.L."/>
            <person name="Sandelin A."/>
            <person name="Schneider C."/>
            <person name="Schoenbach C."/>
            <person name="Sekiguchi K."/>
            <person name="Semple C.A."/>
            <person name="Seno S."/>
            <person name="Sessa L."/>
            <person name="Sheng Y."/>
            <person name="Shibata Y."/>
            <person name="Shimada H."/>
            <person name="Shimada K."/>
            <person name="Silva D."/>
            <person name="Sinclair B."/>
            <person name="Sperling S."/>
            <person name="Stupka E."/>
            <person name="Sugiura K."/>
            <person name="Sultana R."/>
            <person name="Takenaka Y."/>
            <person name="Taki K."/>
            <person name="Tammoja K."/>
            <person name="Tan S.L."/>
            <person name="Tang S."/>
            <person name="Taylor M.S."/>
            <person name="Tegner J."/>
            <person name="Teichmann S.A."/>
            <person name="Ueda H.R."/>
            <person name="van Nimwegen E."/>
            <person name="Verardo R."/>
            <person name="Wei C.L."/>
            <person name="Yagi K."/>
            <person name="Yamanishi H."/>
            <person name="Zabarovsky E."/>
            <person name="Zhu S."/>
            <person name="Zimmer A."/>
            <person name="Hide W."/>
            <person name="Bult C."/>
            <person name="Grimmond S.M."/>
            <person name="Teasdale R.D."/>
            <person name="Liu E.T."/>
            <person name="Brusic V."/>
            <person name="Quackenbush J."/>
            <person name="Wahlestedt C."/>
            <person name="Mattick J.S."/>
            <person name="Hume D.A."/>
            <person name="Kai C."/>
            <person name="Sasaki D."/>
            <person name="Tomaru Y."/>
            <person name="Fukuda S."/>
            <person name="Kanamori-Katayama M."/>
            <person name="Suzuki M."/>
            <person name="Aoki J."/>
            <person name="Arakawa T."/>
            <person name="Iida J."/>
            <person name="Imamura K."/>
            <person name="Itoh M."/>
            <person name="Kato T."/>
            <person name="Kawaji H."/>
            <person name="Kawagashira N."/>
            <person name="Kawashima T."/>
            <person name="Kojima M."/>
            <person name="Kondo S."/>
            <person name="Konno H."/>
            <person name="Nakano K."/>
            <person name="Ninomiya N."/>
            <person name="Nishio T."/>
            <person name="Okada M."/>
            <person name="Plessy C."/>
            <person name="Shibata K."/>
            <person name="Shiraki T."/>
            <person name="Suzuki S."/>
            <person name="Tagami M."/>
            <person name="Waki K."/>
            <person name="Watahiki A."/>
            <person name="Okamura-Oho Y."/>
            <person name="Suzuki H."/>
            <person name="Kawai J."/>
            <person name="Hayashizaki Y."/>
        </authorList>
    </citation>
    <scope>NUCLEOTIDE SEQUENCE [LARGE SCALE MRNA]</scope>
    <source>
        <strain>C57BL/6J</strain>
        <tissue>Embryonic stem cell</tissue>
        <tissue>Head</tissue>
    </source>
</reference>
<reference key="3">
    <citation type="journal article" date="2004" name="Genome Res.">
        <title>The status, quality, and expansion of the NIH full-length cDNA project: the Mammalian Gene Collection (MGC).</title>
        <authorList>
            <consortium name="The MGC Project Team"/>
        </authorList>
    </citation>
    <scope>NUCLEOTIDE SEQUENCE [LARGE SCALE MRNA]</scope>
    <source>
        <strain>Czech II</strain>
        <tissue>Kidney</tissue>
        <tissue>Mammary tumor</tissue>
    </source>
</reference>
<reference key="4">
    <citation type="submission" date="2007-07" db="UniProtKB">
        <authorList>
            <person name="Lubec G."/>
            <person name="Yang J.W."/>
            <person name="Zigmond M."/>
        </authorList>
    </citation>
    <scope>PROTEIN SEQUENCE OF 82-94</scope>
    <source>
        <tissue>Brain</tissue>
    </source>
</reference>
<reference key="5">
    <citation type="journal article" date="2006" name="Circ. Res.">
        <title>PICOT inhibits cardiac hypertrophy and enhances ventricular function and cardiomyocyte contractility.</title>
        <authorList>
            <person name="Jeong D."/>
            <person name="Cha H."/>
            <person name="Kim E."/>
            <person name="Kang M."/>
            <person name="Yang D.K."/>
            <person name="Kim J.M."/>
            <person name="Yoon P.O."/>
            <person name="Oh J.G."/>
            <person name="Bernecker O.Y."/>
            <person name="Sakata S."/>
            <person name="Le T.T."/>
            <person name="Cui L."/>
            <person name="Lee Y.H."/>
            <person name="Kim do H."/>
            <person name="Woo S.H."/>
            <person name="Liao R."/>
            <person name="Hajjar R.J."/>
            <person name="Park W.J."/>
        </authorList>
    </citation>
    <scope>FUNCTION</scope>
    <scope>OVEREXPRESSION</scope>
</reference>
<reference key="6">
    <citation type="journal article" date="2008" name="Circ. Res.">
        <title>PICOT attenuates cardiac hypertrophy by disrupting calcineurin-NFAT signaling.</title>
        <authorList>
            <person name="Jeong D."/>
            <person name="Kim J.M."/>
            <person name="Cha H."/>
            <person name="Oh J.G."/>
            <person name="Park J."/>
            <person name="Yun S.H."/>
            <person name="Ju E.S."/>
            <person name="Jeon E.S."/>
            <person name="Hajjar R.J."/>
            <person name="Park W.J."/>
        </authorList>
    </citation>
    <scope>FUNCTION</scope>
    <scope>SUBCELLULAR LOCATION</scope>
    <scope>OVEREXPRESSION</scope>
    <scope>INTERACTION WITH CSRP2 AND CSRP3</scope>
</reference>
<reference key="7">
    <citation type="journal article" date="2008" name="J. Mol. Cell. Cardiol.">
        <title>PICOT is a critical regulator of cardiac hypertrophy and cardiomyocyte contractility.</title>
        <authorList>
            <person name="Cha H."/>
            <person name="Kim J.M."/>
            <person name="Oh J.G."/>
            <person name="Jeong M.H."/>
            <person name="Park C.S."/>
            <person name="Park J."/>
            <person name="Jeong H.J."/>
            <person name="Park B.K."/>
            <person name="Lee Y.-H."/>
            <person name="Jeong D."/>
            <person name="Yang D.K."/>
            <person name="Bernecker O.Y."/>
            <person name="Kim do H."/>
            <person name="Hajjar R.J."/>
            <person name="Park W.J."/>
        </authorList>
    </citation>
    <scope>FUNCTION</scope>
    <scope>DISRUPTION PHENOTYPE</scope>
</reference>
<reference key="8">
    <citation type="journal article" date="2010" name="Cell">
        <title>A tissue-specific atlas of mouse protein phosphorylation and expression.</title>
        <authorList>
            <person name="Huttlin E.L."/>
            <person name="Jedrychowski M.P."/>
            <person name="Elias J.E."/>
            <person name="Goswami T."/>
            <person name="Rad R."/>
            <person name="Beausoleil S.A."/>
            <person name="Villen J."/>
            <person name="Haas W."/>
            <person name="Sowa M.E."/>
            <person name="Gygi S.P."/>
        </authorList>
    </citation>
    <scope>IDENTIFICATION BY MASS SPECTROMETRY [LARGE SCALE ANALYSIS]</scope>
    <source>
        <tissue>Brain</tissue>
        <tissue>Brown adipose tissue</tissue>
        <tissue>Heart</tissue>
        <tissue>Kidney</tissue>
        <tissue>Liver</tissue>
        <tissue>Lung</tissue>
        <tissue>Pancreas</tissue>
        <tissue>Spleen</tissue>
        <tissue>Testis</tissue>
    </source>
</reference>
<reference key="9">
    <citation type="submission" date="2004-11" db="PDB data bank">
        <title>Solution structure of the picot homology 2 domain of the mouse pkc-interacting cousin of thioredoxin protein.</title>
        <authorList>
            <consortium name="RIKEN structural genomics initiative (RSGI)"/>
        </authorList>
    </citation>
    <scope>STRUCTURE BY NMR OF 241-336</scope>
</reference>
<dbReference type="EMBL" id="AF118650">
    <property type="protein sequence ID" value="AAF28842.1"/>
    <property type="molecule type" value="mRNA"/>
</dbReference>
<dbReference type="EMBL" id="AK010354">
    <property type="protein sequence ID" value="BAB26874.1"/>
    <property type="molecule type" value="mRNA"/>
</dbReference>
<dbReference type="EMBL" id="AK017371">
    <property type="protein sequence ID" value="BAB30712.1"/>
    <property type="molecule type" value="mRNA"/>
</dbReference>
<dbReference type="EMBL" id="AK147158">
    <property type="protein sequence ID" value="BAE27724.1"/>
    <property type="molecule type" value="mRNA"/>
</dbReference>
<dbReference type="EMBL" id="AK152446">
    <property type="protein sequence ID" value="BAE31225.1"/>
    <property type="molecule type" value="mRNA"/>
</dbReference>
<dbReference type="EMBL" id="AK152634">
    <property type="protein sequence ID" value="BAE31376.1"/>
    <property type="molecule type" value="mRNA"/>
</dbReference>
<dbReference type="EMBL" id="AK155190">
    <property type="protein sequence ID" value="BAE33105.1"/>
    <property type="molecule type" value="mRNA"/>
</dbReference>
<dbReference type="EMBL" id="AK167672">
    <property type="protein sequence ID" value="BAE39721.1"/>
    <property type="molecule type" value="mRNA"/>
</dbReference>
<dbReference type="EMBL" id="BC033506">
    <property type="protein sequence ID" value="AAH33506.1"/>
    <property type="molecule type" value="mRNA"/>
</dbReference>
<dbReference type="EMBL" id="BC087885">
    <property type="protein sequence ID" value="AAH87885.1"/>
    <property type="molecule type" value="mRNA"/>
</dbReference>
<dbReference type="CCDS" id="CCDS21948.1"/>
<dbReference type="RefSeq" id="NP_075629.2">
    <property type="nucleotide sequence ID" value="NM_023140.5"/>
</dbReference>
<dbReference type="PDB" id="1WIK">
    <property type="method" value="NMR"/>
    <property type="chains" value="A=241-336"/>
</dbReference>
<dbReference type="PDBsum" id="1WIK"/>
<dbReference type="SMR" id="Q9CQM9"/>
<dbReference type="BioGRID" id="206004">
    <property type="interactions" value="8"/>
</dbReference>
<dbReference type="FunCoup" id="Q9CQM9">
    <property type="interactions" value="3867"/>
</dbReference>
<dbReference type="IntAct" id="Q9CQM9">
    <property type="interactions" value="4"/>
</dbReference>
<dbReference type="MINT" id="Q9CQM9"/>
<dbReference type="STRING" id="10090.ENSMUSP00000066621"/>
<dbReference type="GlyGen" id="Q9CQM9">
    <property type="glycosylation" value="1 site, 1 O-linked glycan (1 site)"/>
</dbReference>
<dbReference type="iPTMnet" id="Q9CQM9"/>
<dbReference type="PhosphoSitePlus" id="Q9CQM9"/>
<dbReference type="SwissPalm" id="Q9CQM9"/>
<dbReference type="REPRODUCTION-2DPAGE" id="IPI00315550"/>
<dbReference type="REPRODUCTION-2DPAGE" id="Q9CQM9"/>
<dbReference type="jPOST" id="Q9CQM9"/>
<dbReference type="PaxDb" id="10090-ENSMUSP00000066621"/>
<dbReference type="PeptideAtlas" id="Q9CQM9"/>
<dbReference type="ProteomicsDB" id="267635"/>
<dbReference type="Pumba" id="Q9CQM9"/>
<dbReference type="Antibodypedia" id="32521">
    <property type="antibodies" value="383 antibodies from 31 providers"/>
</dbReference>
<dbReference type="DNASU" id="30926"/>
<dbReference type="Ensembl" id="ENSMUST00000064404.8">
    <property type="protein sequence ID" value="ENSMUSP00000066621.7"/>
    <property type="gene ID" value="ENSMUSG00000031068.9"/>
</dbReference>
<dbReference type="GeneID" id="30926"/>
<dbReference type="KEGG" id="mmu:30926"/>
<dbReference type="UCSC" id="uc009kew.1">
    <property type="organism name" value="mouse"/>
</dbReference>
<dbReference type="AGR" id="MGI:1353653"/>
<dbReference type="CTD" id="10539"/>
<dbReference type="MGI" id="MGI:1353653">
    <property type="gene designation" value="Glrx3"/>
</dbReference>
<dbReference type="VEuPathDB" id="HostDB:ENSMUSG00000031068"/>
<dbReference type="eggNOG" id="KOG0911">
    <property type="taxonomic scope" value="Eukaryota"/>
</dbReference>
<dbReference type="GeneTree" id="ENSGT00550000075030"/>
<dbReference type="HOGENOM" id="CLU_026126_12_2_1"/>
<dbReference type="InParanoid" id="Q9CQM9"/>
<dbReference type="OMA" id="WAEPCKT"/>
<dbReference type="OrthoDB" id="24842at9989"/>
<dbReference type="PhylomeDB" id="Q9CQM9"/>
<dbReference type="TreeFam" id="TF314151"/>
<dbReference type="BioGRID-ORCS" id="30926">
    <property type="hits" value="16 hits in 79 CRISPR screens"/>
</dbReference>
<dbReference type="ChiTaRS" id="Glrx3">
    <property type="organism name" value="mouse"/>
</dbReference>
<dbReference type="EvolutionaryTrace" id="Q9CQM9"/>
<dbReference type="PRO" id="PR:Q9CQM9"/>
<dbReference type="Proteomes" id="UP000000589">
    <property type="component" value="Chromosome 7"/>
</dbReference>
<dbReference type="RNAct" id="Q9CQM9">
    <property type="molecule type" value="protein"/>
</dbReference>
<dbReference type="Bgee" id="ENSMUSG00000031068">
    <property type="expression patterns" value="Expressed in embryonic brain and 142 other cell types or tissues"/>
</dbReference>
<dbReference type="ExpressionAtlas" id="Q9CQM9">
    <property type="expression patterns" value="baseline and differential"/>
</dbReference>
<dbReference type="GO" id="GO:0005938">
    <property type="term" value="C:cell cortex"/>
    <property type="evidence" value="ECO:0007669"/>
    <property type="project" value="UniProtKB-SubCell"/>
</dbReference>
<dbReference type="GO" id="GO:0005829">
    <property type="term" value="C:cytosol"/>
    <property type="evidence" value="ECO:0007669"/>
    <property type="project" value="UniProtKB-SubCell"/>
</dbReference>
<dbReference type="GO" id="GO:0030018">
    <property type="term" value="C:Z disc"/>
    <property type="evidence" value="ECO:0000314"/>
    <property type="project" value="UniProtKB"/>
</dbReference>
<dbReference type="GO" id="GO:0051536">
    <property type="term" value="F:iron-sulfur cluster binding"/>
    <property type="evidence" value="ECO:0007669"/>
    <property type="project" value="UniProtKB-KW"/>
</dbReference>
<dbReference type="GO" id="GO:0046872">
    <property type="term" value="F:metal ion binding"/>
    <property type="evidence" value="ECO:0007669"/>
    <property type="project" value="UniProtKB-KW"/>
</dbReference>
<dbReference type="GO" id="GO:0044571">
    <property type="term" value="P:[2Fe-2S] cluster assembly"/>
    <property type="evidence" value="ECO:0000250"/>
    <property type="project" value="UniProtKB"/>
</dbReference>
<dbReference type="GO" id="GO:0010614">
    <property type="term" value="P:negative regulation of cardiac muscle hypertrophy"/>
    <property type="evidence" value="ECO:0000315"/>
    <property type="project" value="UniProtKB"/>
</dbReference>
<dbReference type="GO" id="GO:0002026">
    <property type="term" value="P:regulation of the force of heart contraction"/>
    <property type="evidence" value="ECO:0000315"/>
    <property type="project" value="UniProtKB"/>
</dbReference>
<dbReference type="CDD" id="cd03028">
    <property type="entry name" value="GRX_PICOT_like"/>
    <property type="match status" value="2"/>
</dbReference>
<dbReference type="CDD" id="cd02984">
    <property type="entry name" value="TRX_PICOT"/>
    <property type="match status" value="1"/>
</dbReference>
<dbReference type="FunFam" id="3.40.30.10:FF:000090">
    <property type="entry name" value="Glutaredoxin-3"/>
    <property type="match status" value="1"/>
</dbReference>
<dbReference type="FunFam" id="3.40.30.10:FF:000165">
    <property type="entry name" value="glutaredoxin-3 isoform X1"/>
    <property type="match status" value="1"/>
</dbReference>
<dbReference type="FunFam" id="3.40.30.10:FF:000012">
    <property type="entry name" value="Monothiol glutaredoxin"/>
    <property type="match status" value="1"/>
</dbReference>
<dbReference type="Gene3D" id="3.40.30.10">
    <property type="entry name" value="Glutaredoxin"/>
    <property type="match status" value="3"/>
</dbReference>
<dbReference type="InterPro" id="IPR002109">
    <property type="entry name" value="Glutaredoxin"/>
</dbReference>
<dbReference type="InterPro" id="IPR033658">
    <property type="entry name" value="GRX_PICOT-like"/>
</dbReference>
<dbReference type="InterPro" id="IPR004480">
    <property type="entry name" value="Monothiol_GRX-rel"/>
</dbReference>
<dbReference type="InterPro" id="IPR036249">
    <property type="entry name" value="Thioredoxin-like_sf"/>
</dbReference>
<dbReference type="InterPro" id="IPR013766">
    <property type="entry name" value="Thioredoxin_domain"/>
</dbReference>
<dbReference type="NCBIfam" id="TIGR00365">
    <property type="entry name" value="Grx4 family monothiol glutaredoxin"/>
    <property type="match status" value="1"/>
</dbReference>
<dbReference type="PANTHER" id="PTHR10293">
    <property type="entry name" value="GLUTAREDOXIN FAMILY MEMBER"/>
    <property type="match status" value="1"/>
</dbReference>
<dbReference type="PANTHER" id="PTHR10293:SF73">
    <property type="entry name" value="GLUTAREDOXIN-3"/>
    <property type="match status" value="1"/>
</dbReference>
<dbReference type="Pfam" id="PF00462">
    <property type="entry name" value="Glutaredoxin"/>
    <property type="match status" value="2"/>
</dbReference>
<dbReference type="Pfam" id="PF00085">
    <property type="entry name" value="Thioredoxin"/>
    <property type="match status" value="1"/>
</dbReference>
<dbReference type="SUPFAM" id="SSF52833">
    <property type="entry name" value="Thioredoxin-like"/>
    <property type="match status" value="3"/>
</dbReference>
<dbReference type="PROSITE" id="PS51354">
    <property type="entry name" value="GLUTAREDOXIN_2"/>
    <property type="match status" value="2"/>
</dbReference>
<dbReference type="PROSITE" id="PS51352">
    <property type="entry name" value="THIOREDOXIN_2"/>
    <property type="match status" value="1"/>
</dbReference>
<name>GLRX3_MOUSE</name>
<comment type="function">
    <text evidence="1 4 5 6">Together with BOLA2, acts as a cytosolic iron-sulfur (Fe-S) cluster assembly factor that facilitates [2Fe-2S] cluster insertion into a subset of cytosolic proteins (By similarity). Acts as a critical negative regulator of cardiac hypertrophy and a positive inotropic regulator (PubMed:16809552, PubMed:18258855, PubMed:18929570). Required for hemoglobin maturation. Does not possess any thyoredoxin activity since it lacks the conserved motif that is essential for catalytic activity (By similarity).</text>
</comment>
<comment type="subunit">
    <text evidence="1 5">Homodimer; the homodimer is independent of 2Fe-2S clusters. Heterotrimer; forms a heterotrimeric complex composed by two BOLA2 molecules and one GLRX3 molecule; linked by [2Fe-2S] clusters. Interacts (via N-terminus) with PRKCQ/PKC-theta (By similarity). Interacts (via C-terminus) with CSRP3 (PubMed:18258855). Interacts with CSRP2 (PubMed:18258855).</text>
</comment>
<comment type="interaction">
    <interactant intactId="EBI-4319195">
        <id>Q9CQM9</id>
    </interactant>
    <interactant intactId="EBI-2943068">
        <id>Q8WTY4</id>
        <label>Ciapin1</label>
    </interactant>
    <organismsDiffer>false</organismsDiffer>
    <experiments>4</experiments>
</comment>
<comment type="subcellular location">
    <subcellularLocation>
        <location evidence="1">Cytoplasm</location>
        <location evidence="1">Cytosol</location>
    </subcellularLocation>
    <subcellularLocation>
        <location evidence="5">Cytoplasm</location>
        <location evidence="5">Cell cortex</location>
    </subcellularLocation>
    <subcellularLocation>
        <location evidence="5">Cytoplasm</location>
        <location evidence="5">Myofibril</location>
        <location evidence="5">Sarcomere</location>
        <location evidence="5">Z line</location>
    </subcellularLocation>
    <text evidence="5">Under the plasma membrane (PubMed:18258855). After PMA stimulation, GLRX3 and PRKCQ/PKC-theta translocate to a more extended submembrane area (PubMed:18258855). In the Z line, found associated with CSRP3 (PubMed:18258855).</text>
</comment>
<comment type="domain">
    <text evidence="7">The thioredoxin domain lacks the two redox-active cysteines. This strongly suggests that it lacks thioredoxin activity.</text>
</comment>
<comment type="disruption phenotype">
    <text evidence="6">Homozygous null mutants die in utero some time between 12.5 and 14.5 dpc. 12.5 dpc embryos have a smaller body size and hemorrhage in the head. Heterozygous mutants are fertile and show no abnormalities in growth and development, cardiomyocytes exhibit significantly reduced contractility.</text>
</comment>
<comment type="miscellaneous">
    <text evidence="4 5 6">Transgenic mice with cardiac-specific Glrx3 overexpression show that it is a potent inhibitor of cardiac hypertrophy induced by pressure overload (transverse aortic constriction). In addition, overexpression dramatically increases the ventricular function and cardiomyocyte contractility.</text>
</comment>
<protein>
    <recommendedName>
        <fullName>Glutaredoxin-3</fullName>
    </recommendedName>
    <alternativeName>
        <fullName>PKC-interacting cousin of thioredoxin</fullName>
        <shortName>PICOT</shortName>
    </alternativeName>
    <alternativeName>
        <fullName>PKC-theta-interacting protein</fullName>
        <shortName>PKCq-interacting protein</shortName>
    </alternativeName>
    <alternativeName>
        <fullName>Thioredoxin-like protein 2</fullName>
    </alternativeName>
</protein>
<feature type="initiator methionine" description="Removed" evidence="1">
    <location>
        <position position="1"/>
    </location>
</feature>
<feature type="chain" id="PRO_0000120020" description="Glutaredoxin-3">
    <location>
        <begin position="2"/>
        <end position="337"/>
    </location>
</feature>
<feature type="domain" description="Thioredoxin" evidence="3">
    <location>
        <begin position="2"/>
        <end position="119"/>
    </location>
</feature>
<feature type="domain" description="Glutaredoxin 1" evidence="2">
    <location>
        <begin position="144"/>
        <end position="238"/>
    </location>
</feature>
<feature type="domain" description="Glutaredoxin 2" evidence="2">
    <location>
        <begin position="239"/>
        <end position="337"/>
    </location>
</feature>
<feature type="binding site" evidence="1">
    <location>
        <position position="161"/>
    </location>
    <ligand>
        <name>[2Fe-2S] cluster</name>
        <dbReference type="ChEBI" id="CHEBI:190135"/>
        <note>ligand shared between dimeric partners</note>
    </ligand>
</feature>
<feature type="binding site" evidence="1">
    <location>
        <position position="263"/>
    </location>
    <ligand>
        <name>[2Fe-2S] cluster</name>
        <dbReference type="ChEBI" id="CHEBI:190135"/>
        <note>ligand shared between dimeric partners</note>
    </ligand>
</feature>
<feature type="modified residue" description="N-acetylalanine" evidence="1">
    <location>
        <position position="2"/>
    </location>
</feature>
<feature type="modified residue" description="Phosphoserine" evidence="1">
    <location>
        <position position="119"/>
    </location>
</feature>
<feature type="sequence conflict" description="In Ref. 1; AAF28842." evidence="7" ref="1">
    <original>P</original>
    <variation>T</variation>
    <location>
        <position position="76"/>
    </location>
</feature>
<feature type="helix" evidence="8">
    <location>
        <begin position="241"/>
        <end position="245"/>
    </location>
</feature>
<feature type="strand" evidence="8">
    <location>
        <begin position="248"/>
        <end position="256"/>
    </location>
</feature>
<feature type="turn" evidence="8">
    <location>
        <begin position="257"/>
        <end position="259"/>
    </location>
</feature>
<feature type="helix" evidence="8">
    <location>
        <begin position="266"/>
        <end position="275"/>
    </location>
</feature>
<feature type="strand" evidence="8">
    <location>
        <begin position="280"/>
        <end position="287"/>
    </location>
</feature>
<feature type="helix" evidence="8">
    <location>
        <begin position="289"/>
        <end position="299"/>
    </location>
</feature>
<feature type="strand" evidence="8">
    <location>
        <begin position="306"/>
        <end position="308"/>
    </location>
</feature>
<feature type="strand" evidence="8">
    <location>
        <begin position="310"/>
        <end position="315"/>
    </location>
</feature>
<feature type="helix" evidence="8">
    <location>
        <begin position="317"/>
        <end position="326"/>
    </location>
</feature>
<feature type="helix" evidence="8">
    <location>
        <begin position="330"/>
        <end position="334"/>
    </location>
</feature>
<evidence type="ECO:0000250" key="1">
    <source>
        <dbReference type="UniProtKB" id="O76003"/>
    </source>
</evidence>
<evidence type="ECO:0000255" key="2">
    <source>
        <dbReference type="PROSITE-ProRule" id="PRU00686"/>
    </source>
</evidence>
<evidence type="ECO:0000255" key="3">
    <source>
        <dbReference type="PROSITE-ProRule" id="PRU00691"/>
    </source>
</evidence>
<evidence type="ECO:0000269" key="4">
    <source>
    </source>
</evidence>
<evidence type="ECO:0000269" key="5">
    <source>
    </source>
</evidence>
<evidence type="ECO:0000269" key="6">
    <source>
    </source>
</evidence>
<evidence type="ECO:0000305" key="7"/>
<evidence type="ECO:0007829" key="8">
    <source>
        <dbReference type="PDB" id="1WIK"/>
    </source>
</evidence>
<keyword id="KW-0002">3D-structure</keyword>
<keyword id="KW-0007">Acetylation</keyword>
<keyword id="KW-0963">Cytoplasm</keyword>
<keyword id="KW-0903">Direct protein sequencing</keyword>
<keyword id="KW-0408">Iron</keyword>
<keyword id="KW-0411">Iron-sulfur</keyword>
<keyword id="KW-0479">Metal-binding</keyword>
<keyword id="KW-0597">Phosphoprotein</keyword>
<keyword id="KW-1185">Reference proteome</keyword>
<keyword id="KW-0677">Repeat</keyword>
<proteinExistence type="evidence at protein level"/>
<organism>
    <name type="scientific">Mus musculus</name>
    <name type="common">Mouse</name>
    <dbReference type="NCBI Taxonomy" id="10090"/>
    <lineage>
        <taxon>Eukaryota</taxon>
        <taxon>Metazoa</taxon>
        <taxon>Chordata</taxon>
        <taxon>Craniata</taxon>
        <taxon>Vertebrata</taxon>
        <taxon>Euteleostomi</taxon>
        <taxon>Mammalia</taxon>
        <taxon>Eutheria</taxon>
        <taxon>Euarchontoglires</taxon>
        <taxon>Glires</taxon>
        <taxon>Rodentia</taxon>
        <taxon>Myomorpha</taxon>
        <taxon>Muroidea</taxon>
        <taxon>Muridae</taxon>
        <taxon>Murinae</taxon>
        <taxon>Mus</taxon>
        <taxon>Mus</taxon>
    </lineage>
</organism>